<feature type="chain" id="PRO_0000301049" description="Peptide deformylase">
    <location>
        <begin position="1"/>
        <end position="186"/>
    </location>
</feature>
<feature type="active site" evidence="1">
    <location>
        <position position="157"/>
    </location>
</feature>
<feature type="binding site" evidence="1">
    <location>
        <position position="113"/>
    </location>
    <ligand>
        <name>Fe cation</name>
        <dbReference type="ChEBI" id="CHEBI:24875"/>
    </ligand>
</feature>
<feature type="binding site" evidence="1">
    <location>
        <position position="156"/>
    </location>
    <ligand>
        <name>Fe cation</name>
        <dbReference type="ChEBI" id="CHEBI:24875"/>
    </ligand>
</feature>
<feature type="binding site" evidence="1">
    <location>
        <position position="160"/>
    </location>
    <ligand>
        <name>Fe cation</name>
        <dbReference type="ChEBI" id="CHEBI:24875"/>
    </ligand>
</feature>
<dbReference type="EC" id="3.5.1.88" evidence="1"/>
<dbReference type="EMBL" id="CP000233">
    <property type="protein sequence ID" value="ABD99459.1"/>
    <property type="molecule type" value="Genomic_DNA"/>
</dbReference>
<dbReference type="RefSeq" id="WP_003700015.1">
    <property type="nucleotide sequence ID" value="NC_007929.1"/>
</dbReference>
<dbReference type="RefSeq" id="YP_535542.1">
    <property type="nucleotide sequence ID" value="NC_007929.1"/>
</dbReference>
<dbReference type="SMR" id="Q1WU76"/>
<dbReference type="STRING" id="362948.LSL_0649"/>
<dbReference type="KEGG" id="lsl:LSL_0649"/>
<dbReference type="PATRIC" id="fig|362948.14.peg.729"/>
<dbReference type="HOGENOM" id="CLU_061901_4_0_9"/>
<dbReference type="OrthoDB" id="9784988at2"/>
<dbReference type="Proteomes" id="UP000006559">
    <property type="component" value="Chromosome"/>
</dbReference>
<dbReference type="GO" id="GO:0046872">
    <property type="term" value="F:metal ion binding"/>
    <property type="evidence" value="ECO:0007669"/>
    <property type="project" value="UniProtKB-KW"/>
</dbReference>
<dbReference type="GO" id="GO:0042586">
    <property type="term" value="F:peptide deformylase activity"/>
    <property type="evidence" value="ECO:0007669"/>
    <property type="project" value="UniProtKB-UniRule"/>
</dbReference>
<dbReference type="GO" id="GO:0043686">
    <property type="term" value="P:co-translational protein modification"/>
    <property type="evidence" value="ECO:0007669"/>
    <property type="project" value="TreeGrafter"/>
</dbReference>
<dbReference type="GO" id="GO:0006412">
    <property type="term" value="P:translation"/>
    <property type="evidence" value="ECO:0007669"/>
    <property type="project" value="UniProtKB-UniRule"/>
</dbReference>
<dbReference type="CDD" id="cd00487">
    <property type="entry name" value="Pep_deformylase"/>
    <property type="match status" value="1"/>
</dbReference>
<dbReference type="FunFam" id="3.90.45.10:FF:000002">
    <property type="entry name" value="Peptide deformylase"/>
    <property type="match status" value="1"/>
</dbReference>
<dbReference type="Gene3D" id="3.90.45.10">
    <property type="entry name" value="Peptide deformylase"/>
    <property type="match status" value="1"/>
</dbReference>
<dbReference type="HAMAP" id="MF_00163">
    <property type="entry name" value="Pep_deformylase"/>
    <property type="match status" value="1"/>
</dbReference>
<dbReference type="InterPro" id="IPR023635">
    <property type="entry name" value="Peptide_deformylase"/>
</dbReference>
<dbReference type="InterPro" id="IPR036821">
    <property type="entry name" value="Peptide_deformylase_sf"/>
</dbReference>
<dbReference type="NCBIfam" id="TIGR00079">
    <property type="entry name" value="pept_deformyl"/>
    <property type="match status" value="1"/>
</dbReference>
<dbReference type="PANTHER" id="PTHR10458">
    <property type="entry name" value="PEPTIDE DEFORMYLASE"/>
    <property type="match status" value="1"/>
</dbReference>
<dbReference type="PANTHER" id="PTHR10458:SF8">
    <property type="entry name" value="PEPTIDE DEFORMYLASE 2"/>
    <property type="match status" value="1"/>
</dbReference>
<dbReference type="Pfam" id="PF01327">
    <property type="entry name" value="Pep_deformylase"/>
    <property type="match status" value="1"/>
</dbReference>
<dbReference type="PIRSF" id="PIRSF004749">
    <property type="entry name" value="Pep_def"/>
    <property type="match status" value="1"/>
</dbReference>
<dbReference type="PRINTS" id="PR01576">
    <property type="entry name" value="PDEFORMYLASE"/>
</dbReference>
<dbReference type="SUPFAM" id="SSF56420">
    <property type="entry name" value="Peptide deformylase"/>
    <property type="match status" value="1"/>
</dbReference>
<protein>
    <recommendedName>
        <fullName evidence="1">Peptide deformylase</fullName>
        <shortName evidence="1">PDF</shortName>
        <ecNumber evidence="1">3.5.1.88</ecNumber>
    </recommendedName>
    <alternativeName>
        <fullName evidence="1">Polypeptide deformylase</fullName>
    </alternativeName>
</protein>
<accession>Q1WU76</accession>
<evidence type="ECO:0000255" key="1">
    <source>
        <dbReference type="HAMAP-Rule" id="MF_00163"/>
    </source>
</evidence>
<organism>
    <name type="scientific">Ligilactobacillus salivarius (strain UCC118)</name>
    <name type="common">Lactobacillus salivarius</name>
    <dbReference type="NCBI Taxonomy" id="362948"/>
    <lineage>
        <taxon>Bacteria</taxon>
        <taxon>Bacillati</taxon>
        <taxon>Bacillota</taxon>
        <taxon>Bacilli</taxon>
        <taxon>Lactobacillales</taxon>
        <taxon>Lactobacillaceae</taxon>
        <taxon>Ligilactobacillus</taxon>
    </lineage>
</organism>
<comment type="function">
    <text evidence="1">Removes the formyl group from the N-terminal Met of newly synthesized proteins. Requires at least a dipeptide for an efficient rate of reaction. N-terminal L-methionine is a prerequisite for activity but the enzyme has broad specificity at other positions.</text>
</comment>
<comment type="catalytic activity">
    <reaction evidence="1">
        <text>N-terminal N-formyl-L-methionyl-[peptide] + H2O = N-terminal L-methionyl-[peptide] + formate</text>
        <dbReference type="Rhea" id="RHEA:24420"/>
        <dbReference type="Rhea" id="RHEA-COMP:10639"/>
        <dbReference type="Rhea" id="RHEA-COMP:10640"/>
        <dbReference type="ChEBI" id="CHEBI:15377"/>
        <dbReference type="ChEBI" id="CHEBI:15740"/>
        <dbReference type="ChEBI" id="CHEBI:49298"/>
        <dbReference type="ChEBI" id="CHEBI:64731"/>
        <dbReference type="EC" id="3.5.1.88"/>
    </reaction>
</comment>
<comment type="cofactor">
    <cofactor evidence="1">
        <name>Fe(2+)</name>
        <dbReference type="ChEBI" id="CHEBI:29033"/>
    </cofactor>
    <text evidence="1">Binds 1 Fe(2+) ion.</text>
</comment>
<comment type="similarity">
    <text evidence="1">Belongs to the polypeptide deformylase family.</text>
</comment>
<gene>
    <name evidence="1" type="primary">def</name>
    <name type="ordered locus">LSL_0649</name>
</gene>
<reference key="1">
    <citation type="journal article" date="2006" name="Proc. Natl. Acad. Sci. U.S.A.">
        <title>Multireplicon genome architecture of Lactobacillus salivarius.</title>
        <authorList>
            <person name="Claesson M.J."/>
            <person name="Li Y."/>
            <person name="Leahy S."/>
            <person name="Canchaya C."/>
            <person name="van Pijkeren J.P."/>
            <person name="Cerdeno-Tarraga A.M."/>
            <person name="Parkhill J."/>
            <person name="Flynn S."/>
            <person name="O'Sullivan G.C."/>
            <person name="Collins J.K."/>
            <person name="Higgins D."/>
            <person name="Shanahan F."/>
            <person name="Fitzgerald G.F."/>
            <person name="van Sinderen D."/>
            <person name="O'Toole P.W."/>
        </authorList>
    </citation>
    <scope>NUCLEOTIDE SEQUENCE [LARGE SCALE GENOMIC DNA]</scope>
    <source>
        <strain>UCC118</strain>
    </source>
</reference>
<proteinExistence type="inferred from homology"/>
<keyword id="KW-0378">Hydrolase</keyword>
<keyword id="KW-0408">Iron</keyword>
<keyword id="KW-0479">Metal-binding</keyword>
<keyword id="KW-0648">Protein biosynthesis</keyword>
<keyword id="KW-1185">Reference proteome</keyword>
<name>DEF_LIGS1</name>
<sequence length="186" mass="21063">MITMDNIIRDGNPTLRARAKAIEFPLSEEDKKLAHDMMEFLENSQNPEIAKKYHLRAGVGLAAPQVDVSKRMTAVLVPGIEDDDEPIFKHVLINPTILSESVQLAALGEGEGCLSVDRDIPGYVPRHDRIKLRWYDLDGNKHVERLRDYPAIVVQHEIDHLNGILFYDHINKEQPLTVPEGTIILE</sequence>